<sequence>MNPLIIKLGGVLLDSDEALERLFTALDSYRAEHRCPLLIVHGGGCLVDELMHKLSLPVVKKNGLRVTPADQIAIITGALAGTANKTLLAWAKKHAINAVGLCLGDGDSVNVTPLDPALGHVGRAHPGSPVLLTTLLEAGYLPIISSIGLTHDGELMNVNADQAATALAATLGADLILLSDISGILDGKGQRIAEMTAQKAEQLIEQGIITDGMIVKVNAALDAARTLGRPVDIASWRHAEQLPALFNGVAIGTRILA</sequence>
<reference key="1">
    <citation type="journal article" date="2006" name="Genome Res.">
        <title>Massive genome erosion and functional adaptations provide insights into the symbiotic lifestyle of Sodalis glossinidius in the tsetse host.</title>
        <authorList>
            <person name="Toh H."/>
            <person name="Weiss B.L."/>
            <person name="Perkin S.A.H."/>
            <person name="Yamashita A."/>
            <person name="Oshima K."/>
            <person name="Hattori M."/>
            <person name="Aksoy S."/>
        </authorList>
    </citation>
    <scope>NUCLEOTIDE SEQUENCE [LARGE SCALE GENOMIC DNA]</scope>
    <source>
        <strain>morsitans</strain>
    </source>
</reference>
<comment type="function">
    <text evidence="1">Catalyzes the ATP-dependent phosphorylation of N-acetyl-L-glutamate.</text>
</comment>
<comment type="catalytic activity">
    <reaction evidence="1">
        <text>N-acetyl-L-glutamate + ATP = N-acetyl-L-glutamyl 5-phosphate + ADP</text>
        <dbReference type="Rhea" id="RHEA:14629"/>
        <dbReference type="ChEBI" id="CHEBI:30616"/>
        <dbReference type="ChEBI" id="CHEBI:44337"/>
        <dbReference type="ChEBI" id="CHEBI:57936"/>
        <dbReference type="ChEBI" id="CHEBI:456216"/>
        <dbReference type="EC" id="2.7.2.8"/>
    </reaction>
</comment>
<comment type="pathway">
    <text evidence="1">Amino-acid biosynthesis; L-arginine biosynthesis; N(2)-acetyl-L-ornithine from L-glutamate: step 2/4.</text>
</comment>
<comment type="subunit">
    <text evidence="1">Homodimer.</text>
</comment>
<comment type="subcellular location">
    <subcellularLocation>
        <location evidence="1">Cytoplasm</location>
    </subcellularLocation>
</comment>
<comment type="similarity">
    <text evidence="1">Belongs to the acetylglutamate kinase family. ArgB subfamily.</text>
</comment>
<protein>
    <recommendedName>
        <fullName evidence="1">Acetylglutamate kinase</fullName>
        <ecNumber evidence="1">2.7.2.8</ecNumber>
    </recommendedName>
    <alternativeName>
        <fullName evidence="1">N-acetyl-L-glutamate 5-phosphotransferase</fullName>
    </alternativeName>
    <alternativeName>
        <fullName evidence="1">NAG kinase</fullName>
        <shortName evidence="1">NAGK</shortName>
    </alternativeName>
</protein>
<accession>Q2NQZ0</accession>
<name>ARGB_SODGM</name>
<organism>
    <name type="scientific">Sodalis glossinidius (strain morsitans)</name>
    <dbReference type="NCBI Taxonomy" id="343509"/>
    <lineage>
        <taxon>Bacteria</taxon>
        <taxon>Pseudomonadati</taxon>
        <taxon>Pseudomonadota</taxon>
        <taxon>Gammaproteobacteria</taxon>
        <taxon>Enterobacterales</taxon>
        <taxon>Bruguierivoracaceae</taxon>
        <taxon>Sodalis</taxon>
    </lineage>
</organism>
<keyword id="KW-0028">Amino-acid biosynthesis</keyword>
<keyword id="KW-0055">Arginine biosynthesis</keyword>
<keyword id="KW-0067">ATP-binding</keyword>
<keyword id="KW-0963">Cytoplasm</keyword>
<keyword id="KW-0418">Kinase</keyword>
<keyword id="KW-0547">Nucleotide-binding</keyword>
<keyword id="KW-0808">Transferase</keyword>
<proteinExistence type="inferred from homology"/>
<dbReference type="EC" id="2.7.2.8" evidence="1"/>
<dbReference type="EMBL" id="AP008232">
    <property type="protein sequence ID" value="BAE75435.1"/>
    <property type="molecule type" value="Genomic_DNA"/>
</dbReference>
<dbReference type="SMR" id="Q2NQZ0"/>
<dbReference type="STRING" id="343509.SG2160"/>
<dbReference type="KEGG" id="sgl:SG2160"/>
<dbReference type="eggNOG" id="COG0548">
    <property type="taxonomic scope" value="Bacteria"/>
</dbReference>
<dbReference type="HOGENOM" id="CLU_053680_1_1_6"/>
<dbReference type="OrthoDB" id="5915023at2"/>
<dbReference type="BioCyc" id="SGLO343509:SGP1_RS19940-MONOMER"/>
<dbReference type="UniPathway" id="UPA00068">
    <property type="reaction ID" value="UER00107"/>
</dbReference>
<dbReference type="Proteomes" id="UP000001932">
    <property type="component" value="Chromosome"/>
</dbReference>
<dbReference type="GO" id="GO:0005737">
    <property type="term" value="C:cytoplasm"/>
    <property type="evidence" value="ECO:0007669"/>
    <property type="project" value="UniProtKB-SubCell"/>
</dbReference>
<dbReference type="GO" id="GO:0003991">
    <property type="term" value="F:acetylglutamate kinase activity"/>
    <property type="evidence" value="ECO:0007669"/>
    <property type="project" value="UniProtKB-UniRule"/>
</dbReference>
<dbReference type="GO" id="GO:0005524">
    <property type="term" value="F:ATP binding"/>
    <property type="evidence" value="ECO:0007669"/>
    <property type="project" value="UniProtKB-UniRule"/>
</dbReference>
<dbReference type="GO" id="GO:0042450">
    <property type="term" value="P:arginine biosynthetic process via ornithine"/>
    <property type="evidence" value="ECO:0007669"/>
    <property type="project" value="UniProtKB-UniRule"/>
</dbReference>
<dbReference type="GO" id="GO:0006526">
    <property type="term" value="P:L-arginine biosynthetic process"/>
    <property type="evidence" value="ECO:0007669"/>
    <property type="project" value="UniProtKB-UniPathway"/>
</dbReference>
<dbReference type="CDD" id="cd04249">
    <property type="entry name" value="AAK_NAGK-NC"/>
    <property type="match status" value="1"/>
</dbReference>
<dbReference type="FunFam" id="3.40.1160.10:FF:000008">
    <property type="entry name" value="Acetylglutamate kinase"/>
    <property type="match status" value="1"/>
</dbReference>
<dbReference type="Gene3D" id="3.40.1160.10">
    <property type="entry name" value="Acetylglutamate kinase-like"/>
    <property type="match status" value="1"/>
</dbReference>
<dbReference type="HAMAP" id="MF_00082">
    <property type="entry name" value="ArgB"/>
    <property type="match status" value="1"/>
</dbReference>
<dbReference type="InterPro" id="IPR036393">
    <property type="entry name" value="AceGlu_kinase-like_sf"/>
</dbReference>
<dbReference type="InterPro" id="IPR004662">
    <property type="entry name" value="AcgluKinase_fam"/>
</dbReference>
<dbReference type="InterPro" id="IPR037528">
    <property type="entry name" value="ArgB"/>
</dbReference>
<dbReference type="InterPro" id="IPR001048">
    <property type="entry name" value="Asp/Glu/Uridylate_kinase"/>
</dbReference>
<dbReference type="InterPro" id="IPR041731">
    <property type="entry name" value="NAGK-NC"/>
</dbReference>
<dbReference type="NCBIfam" id="TIGR00761">
    <property type="entry name" value="argB"/>
    <property type="match status" value="1"/>
</dbReference>
<dbReference type="PANTHER" id="PTHR23342">
    <property type="entry name" value="N-ACETYLGLUTAMATE SYNTHASE"/>
    <property type="match status" value="1"/>
</dbReference>
<dbReference type="PANTHER" id="PTHR23342:SF0">
    <property type="entry name" value="N-ACETYLGLUTAMATE SYNTHASE, MITOCHONDRIAL"/>
    <property type="match status" value="1"/>
</dbReference>
<dbReference type="Pfam" id="PF00696">
    <property type="entry name" value="AA_kinase"/>
    <property type="match status" value="1"/>
</dbReference>
<dbReference type="PIRSF" id="PIRSF000728">
    <property type="entry name" value="NAGK"/>
    <property type="match status" value="1"/>
</dbReference>
<dbReference type="SUPFAM" id="SSF53633">
    <property type="entry name" value="Carbamate kinase-like"/>
    <property type="match status" value="1"/>
</dbReference>
<feature type="chain" id="PRO_0000264763" description="Acetylglutamate kinase">
    <location>
        <begin position="1"/>
        <end position="257"/>
    </location>
</feature>
<feature type="binding site" evidence="1">
    <location>
        <begin position="43"/>
        <end position="44"/>
    </location>
    <ligand>
        <name>substrate</name>
    </ligand>
</feature>
<feature type="binding site" evidence="1">
    <location>
        <position position="65"/>
    </location>
    <ligand>
        <name>substrate</name>
    </ligand>
</feature>
<feature type="binding site" evidence="1">
    <location>
        <position position="157"/>
    </location>
    <ligand>
        <name>substrate</name>
    </ligand>
</feature>
<feature type="binding site" evidence="1">
    <location>
        <begin position="180"/>
        <end position="185"/>
    </location>
    <ligand>
        <name>ATP</name>
        <dbReference type="ChEBI" id="CHEBI:30616"/>
    </ligand>
</feature>
<feature type="binding site" evidence="1">
    <location>
        <begin position="208"/>
        <end position="210"/>
    </location>
    <ligand>
        <name>ATP</name>
        <dbReference type="ChEBI" id="CHEBI:30616"/>
    </ligand>
</feature>
<feature type="site" description="Transition state stabilizer" evidence="1">
    <location>
        <position position="7"/>
    </location>
</feature>
<feature type="site" description="Transition state stabilizer" evidence="1">
    <location>
        <position position="216"/>
    </location>
</feature>
<evidence type="ECO:0000255" key="1">
    <source>
        <dbReference type="HAMAP-Rule" id="MF_00082"/>
    </source>
</evidence>
<gene>
    <name evidence="1" type="primary">argB</name>
    <name type="ordered locus">SG2160</name>
</gene>